<accession>A7FWM6</accession>
<comment type="function">
    <text evidence="1">Catalyzes the reversible interconversion of serine and glycine with tetrahydrofolate (THF) serving as the one-carbon carrier. This reaction serves as the major source of one-carbon groups required for the biosynthesis of purines, thymidylate, methionine, and other important biomolecules. Also exhibits THF-independent aldolase activity toward beta-hydroxyamino acids, producing glycine and aldehydes, via a retro-aldol mechanism.</text>
</comment>
<comment type="catalytic activity">
    <reaction evidence="1">
        <text>(6R)-5,10-methylene-5,6,7,8-tetrahydrofolate + glycine + H2O = (6S)-5,6,7,8-tetrahydrofolate + L-serine</text>
        <dbReference type="Rhea" id="RHEA:15481"/>
        <dbReference type="ChEBI" id="CHEBI:15377"/>
        <dbReference type="ChEBI" id="CHEBI:15636"/>
        <dbReference type="ChEBI" id="CHEBI:33384"/>
        <dbReference type="ChEBI" id="CHEBI:57305"/>
        <dbReference type="ChEBI" id="CHEBI:57453"/>
        <dbReference type="EC" id="2.1.2.1"/>
    </reaction>
</comment>
<comment type="cofactor">
    <cofactor evidence="1">
        <name>pyridoxal 5'-phosphate</name>
        <dbReference type="ChEBI" id="CHEBI:597326"/>
    </cofactor>
</comment>
<comment type="pathway">
    <text evidence="1">One-carbon metabolism; tetrahydrofolate interconversion.</text>
</comment>
<comment type="pathway">
    <text evidence="1">Amino-acid biosynthesis; glycine biosynthesis; glycine from L-serine: step 1/1.</text>
</comment>
<comment type="subunit">
    <text evidence="1">Homodimer.</text>
</comment>
<comment type="subcellular location">
    <subcellularLocation>
        <location evidence="1">Cytoplasm</location>
    </subcellularLocation>
</comment>
<comment type="similarity">
    <text evidence="1">Belongs to the SHMT family.</text>
</comment>
<reference key="1">
    <citation type="journal article" date="2007" name="PLoS ONE">
        <title>Analysis of the neurotoxin complex genes in Clostridium botulinum A1-A4 and B1 strains: BoNT/A3, /Ba4 and /B1 clusters are located within plasmids.</title>
        <authorList>
            <person name="Smith T.J."/>
            <person name="Hill K.K."/>
            <person name="Foley B.T."/>
            <person name="Detter J.C."/>
            <person name="Munk A.C."/>
            <person name="Bruce D.C."/>
            <person name="Doggett N.A."/>
            <person name="Smith L.A."/>
            <person name="Marks J.D."/>
            <person name="Xie G."/>
            <person name="Brettin T.S."/>
        </authorList>
    </citation>
    <scope>NUCLEOTIDE SEQUENCE [LARGE SCALE GENOMIC DNA]</scope>
    <source>
        <strain>ATCC 19397 / Type A</strain>
    </source>
</reference>
<feature type="chain" id="PRO_1000006236" description="Serine hydroxymethyltransferase">
    <location>
        <begin position="1"/>
        <end position="413"/>
    </location>
</feature>
<feature type="binding site" evidence="1">
    <location>
        <position position="119"/>
    </location>
    <ligand>
        <name>(6S)-5,6,7,8-tetrahydrofolate</name>
        <dbReference type="ChEBI" id="CHEBI:57453"/>
    </ligand>
</feature>
<feature type="binding site" evidence="1">
    <location>
        <begin position="123"/>
        <end position="125"/>
    </location>
    <ligand>
        <name>(6S)-5,6,7,8-tetrahydrofolate</name>
        <dbReference type="ChEBI" id="CHEBI:57453"/>
    </ligand>
</feature>
<feature type="binding site" evidence="1">
    <location>
        <begin position="351"/>
        <end position="353"/>
    </location>
    <ligand>
        <name>(6S)-5,6,7,8-tetrahydrofolate</name>
        <dbReference type="ChEBI" id="CHEBI:57453"/>
    </ligand>
</feature>
<feature type="site" description="Plays an important role in substrate specificity" evidence="1">
    <location>
        <position position="227"/>
    </location>
</feature>
<feature type="modified residue" description="N6-(pyridoxal phosphate)lysine" evidence="1">
    <location>
        <position position="228"/>
    </location>
</feature>
<sequence length="413" mass="46354">MDFTNLKNTDPELLDMIKKEEERQEYNIELIASENFTSLSVMESMGSLLTNKYAEGYPHKRYYGGCEFVDEVEDLARERLKKLFAAEHANVQPHSGSQANMAVYMSVLQTGDTILGMDLSHGGHLTHGSPVNFSGKLYNFISYGVDKETETIDYEKLKKIALENRPKMIVSGASAYPRIIDFQKIREICDEIDAYMMVDMAHIAGLVATGLHPSPVPYADFVTTTTHKTLRGPRGGAILCKEKYAKAVDKAIFPGIQGGPLMHTIAAKAVCFGEALREDYKEYMQQVVKNTKVLGEELKNYGFRLISGGTDNHLLLIDLTNKNITGKDAEKLLDSVGITVNKNTIPFETLSPFITSGIRIGTPAVTTRGFKEEEMKKIAYFMNYSIEHREENLSQIKEQIKEICKKYPLYQNA</sequence>
<name>GLYA_CLOB1</name>
<organism>
    <name type="scientific">Clostridium botulinum (strain ATCC 19397 / Type A)</name>
    <dbReference type="NCBI Taxonomy" id="441770"/>
    <lineage>
        <taxon>Bacteria</taxon>
        <taxon>Bacillati</taxon>
        <taxon>Bacillota</taxon>
        <taxon>Clostridia</taxon>
        <taxon>Eubacteriales</taxon>
        <taxon>Clostridiaceae</taxon>
        <taxon>Clostridium</taxon>
    </lineage>
</organism>
<evidence type="ECO:0000255" key="1">
    <source>
        <dbReference type="HAMAP-Rule" id="MF_00051"/>
    </source>
</evidence>
<proteinExistence type="inferred from homology"/>
<keyword id="KW-0028">Amino-acid biosynthesis</keyword>
<keyword id="KW-0963">Cytoplasm</keyword>
<keyword id="KW-0554">One-carbon metabolism</keyword>
<keyword id="KW-0663">Pyridoxal phosphate</keyword>
<keyword id="KW-0808">Transferase</keyword>
<dbReference type="EC" id="2.1.2.1" evidence="1"/>
<dbReference type="EMBL" id="CP000726">
    <property type="protein sequence ID" value="ABS33881.1"/>
    <property type="molecule type" value="Genomic_DNA"/>
</dbReference>
<dbReference type="RefSeq" id="WP_011986909.1">
    <property type="nucleotide sequence ID" value="NC_009697.1"/>
</dbReference>
<dbReference type="SMR" id="A7FWM6"/>
<dbReference type="GeneID" id="5186850"/>
<dbReference type="KEGG" id="cba:CLB_2536"/>
<dbReference type="HOGENOM" id="CLU_022477_2_1_9"/>
<dbReference type="UniPathway" id="UPA00193"/>
<dbReference type="UniPathway" id="UPA00288">
    <property type="reaction ID" value="UER01023"/>
</dbReference>
<dbReference type="GO" id="GO:0005829">
    <property type="term" value="C:cytosol"/>
    <property type="evidence" value="ECO:0007669"/>
    <property type="project" value="TreeGrafter"/>
</dbReference>
<dbReference type="GO" id="GO:0004372">
    <property type="term" value="F:glycine hydroxymethyltransferase activity"/>
    <property type="evidence" value="ECO:0007669"/>
    <property type="project" value="UniProtKB-UniRule"/>
</dbReference>
<dbReference type="GO" id="GO:0030170">
    <property type="term" value="F:pyridoxal phosphate binding"/>
    <property type="evidence" value="ECO:0007669"/>
    <property type="project" value="UniProtKB-UniRule"/>
</dbReference>
<dbReference type="GO" id="GO:0019264">
    <property type="term" value="P:glycine biosynthetic process from serine"/>
    <property type="evidence" value="ECO:0007669"/>
    <property type="project" value="UniProtKB-UniRule"/>
</dbReference>
<dbReference type="GO" id="GO:0035999">
    <property type="term" value="P:tetrahydrofolate interconversion"/>
    <property type="evidence" value="ECO:0007669"/>
    <property type="project" value="UniProtKB-UniRule"/>
</dbReference>
<dbReference type="CDD" id="cd00378">
    <property type="entry name" value="SHMT"/>
    <property type="match status" value="1"/>
</dbReference>
<dbReference type="FunFam" id="3.40.640.10:FF:000001">
    <property type="entry name" value="Serine hydroxymethyltransferase"/>
    <property type="match status" value="1"/>
</dbReference>
<dbReference type="FunFam" id="3.90.1150.10:FF:000003">
    <property type="entry name" value="Serine hydroxymethyltransferase"/>
    <property type="match status" value="1"/>
</dbReference>
<dbReference type="Gene3D" id="3.90.1150.10">
    <property type="entry name" value="Aspartate Aminotransferase, domain 1"/>
    <property type="match status" value="1"/>
</dbReference>
<dbReference type="Gene3D" id="3.40.640.10">
    <property type="entry name" value="Type I PLP-dependent aspartate aminotransferase-like (Major domain)"/>
    <property type="match status" value="1"/>
</dbReference>
<dbReference type="HAMAP" id="MF_00051">
    <property type="entry name" value="SHMT"/>
    <property type="match status" value="1"/>
</dbReference>
<dbReference type="InterPro" id="IPR015424">
    <property type="entry name" value="PyrdxlP-dep_Trfase"/>
</dbReference>
<dbReference type="InterPro" id="IPR015421">
    <property type="entry name" value="PyrdxlP-dep_Trfase_major"/>
</dbReference>
<dbReference type="InterPro" id="IPR015422">
    <property type="entry name" value="PyrdxlP-dep_Trfase_small"/>
</dbReference>
<dbReference type="InterPro" id="IPR001085">
    <property type="entry name" value="Ser_HO-MeTrfase"/>
</dbReference>
<dbReference type="InterPro" id="IPR049943">
    <property type="entry name" value="Ser_HO-MeTrfase-like"/>
</dbReference>
<dbReference type="InterPro" id="IPR019798">
    <property type="entry name" value="Ser_HO-MeTrfase_PLP_BS"/>
</dbReference>
<dbReference type="InterPro" id="IPR039429">
    <property type="entry name" value="SHMT-like_dom"/>
</dbReference>
<dbReference type="NCBIfam" id="NF000586">
    <property type="entry name" value="PRK00011.1"/>
    <property type="match status" value="1"/>
</dbReference>
<dbReference type="PANTHER" id="PTHR11680">
    <property type="entry name" value="SERINE HYDROXYMETHYLTRANSFERASE"/>
    <property type="match status" value="1"/>
</dbReference>
<dbReference type="PANTHER" id="PTHR11680:SF35">
    <property type="entry name" value="SERINE HYDROXYMETHYLTRANSFERASE 1"/>
    <property type="match status" value="1"/>
</dbReference>
<dbReference type="Pfam" id="PF00464">
    <property type="entry name" value="SHMT"/>
    <property type="match status" value="1"/>
</dbReference>
<dbReference type="PIRSF" id="PIRSF000412">
    <property type="entry name" value="SHMT"/>
    <property type="match status" value="1"/>
</dbReference>
<dbReference type="SUPFAM" id="SSF53383">
    <property type="entry name" value="PLP-dependent transferases"/>
    <property type="match status" value="1"/>
</dbReference>
<dbReference type="PROSITE" id="PS00096">
    <property type="entry name" value="SHMT"/>
    <property type="match status" value="1"/>
</dbReference>
<protein>
    <recommendedName>
        <fullName evidence="1">Serine hydroxymethyltransferase</fullName>
        <shortName evidence="1">SHMT</shortName>
        <shortName evidence="1">Serine methylase</shortName>
        <ecNumber evidence="1">2.1.2.1</ecNumber>
    </recommendedName>
</protein>
<gene>
    <name evidence="1" type="primary">glyA</name>
    <name type="ordered locus">CLB_2536</name>
</gene>